<accession>Q5R4H4</accession>
<accession>K7EUA3</accession>
<accession>Q5RDX8</accession>
<comment type="function">
    <text evidence="1">Signaling adapter that controls various cellular protrusions by regulating actin cytoskeleton dynamics and architecture. Depending on its association with other signal transducers, can regulate different processes. Together with SOS1 and ABI1, forms a trimeric complex that participates in transduction of signals from Ras to Rac by activating the Rac-specific guanine nucleotide exchange factor (GEF) activity. Acts as a direct regulator of actin dynamics by binding actin filaments and has both barbed-end actin filament capping and actin bundling activities depending on the context. Displays barbed-end actin capping activity when associated with ABI1, thereby regulating actin-based motility process: capping activity is auto-inhibited and inhibition is relieved upon ABI1 interaction. Also shows actin bundling activity when associated with BAIAP2, enhancing BAIAP2-dependent membrane extensions and promoting filopodial protrusions. Involved in the regulation of processes such as axonal filopodia growth, stereocilia length, dendritic cell migration and cancer cell migration and invasion. Acts as a regulator of axonal filopodia formation in neurons: in the absence of neurotrophic factors, negatively regulates axonal filopodia formation via actin-capping activity. In contrast, it is phosphorylated in the presence of BDNF leading to inhibition of its actin-capping activity and stimulation of filopodia formation. Component of a complex with WHRN and MYO15A that localizes at stereocilia tips and is required for elongation of the stereocilia actin core. Indirectly involved in cell cycle progression; its degradation following ubiquitination being required during G2 phase to promote cell shape changes (By similarity).</text>
</comment>
<comment type="subunit">
    <text evidence="1">Homodimer. Part of a complex consisting of ABI1, EPS8 and SOS1. Interacts with BAIAP2. Interacts with SHB and LANCL1. Interacts with EGFR; mediates EPS8 phosphorylation. Interacts with MYO15A and WHRN (By similarity).</text>
</comment>
<comment type="subcellular location">
    <subcellularLocation>
        <location evidence="1">Cytoplasm</location>
        <location evidence="1">Cell cortex</location>
    </subcellularLocation>
    <subcellularLocation>
        <location evidence="1">Cell projection</location>
        <location evidence="1">Ruffle membrane</location>
    </subcellularLocation>
    <subcellularLocation>
        <location evidence="1">Cell projection</location>
        <location evidence="1">Growth cone</location>
    </subcellularLocation>
    <subcellularLocation>
        <location evidence="1 3">Cell projection</location>
        <location evidence="1 3">Stereocilium</location>
    </subcellularLocation>
    <subcellularLocation>
        <location evidence="1">Synapse</location>
        <location evidence="1">Synaptosome</location>
    </subcellularLocation>
    <text evidence="1 3">Localizes at the tips of the stereocilia of the inner and outer hair cells (By similarity). Localizes to the midzone of dividing cells.</text>
</comment>
<comment type="domain">
    <text evidence="1">The effector region is required for activating the Rac-specific guanine nucleotide exchange factor (GEF) activity. It mediates both barbed-end actin capping and actin bundling activities. The capping activity is mediated by an amphipathic helix that binds within the hydrophobic pocket at the barbed ends of actin blocking further addition of actin monomers, while the bundling activity is mediated by a compact 4 helix bundle, which contacts 3 actin subunits along the filament (By similarity).</text>
</comment>
<comment type="domain">
    <text evidence="1">The SH3 domain mediates interaction with SHB.</text>
</comment>
<comment type="PTM">
    <text evidence="1">Ubiquitinated by the SCF(FBXW5) E3 ubiquitin-protein ligase complex during G2 phase, leading to its transient degradation and subsequent cell shape changes required to allow mitotic progression. Reappears at the midzone of dividing cells (By similarity).</text>
</comment>
<comment type="PTM">
    <text evidence="1">Phosphorylation at Ser-625 and Thr-629 by MAPK following BDNF treatment promotes removal from actin and filopodia formation. Phosphorylated by several receptor tyrosine kinases (By similarity).</text>
</comment>
<comment type="similarity">
    <text evidence="8">Belongs to the EPS8 family.</text>
</comment>
<evidence type="ECO:0000250" key="1"/>
<evidence type="ECO:0000250" key="2">
    <source>
        <dbReference type="UniProtKB" id="F1M3L7"/>
    </source>
</evidence>
<evidence type="ECO:0000250" key="3">
    <source>
        <dbReference type="UniProtKB" id="Q08509"/>
    </source>
</evidence>
<evidence type="ECO:0000250" key="4">
    <source>
        <dbReference type="UniProtKB" id="Q12929"/>
    </source>
</evidence>
<evidence type="ECO:0000255" key="5"/>
<evidence type="ECO:0000255" key="6">
    <source>
        <dbReference type="PROSITE-ProRule" id="PRU00192"/>
    </source>
</evidence>
<evidence type="ECO:0000256" key="7">
    <source>
        <dbReference type="SAM" id="MobiDB-lite"/>
    </source>
</evidence>
<evidence type="ECO:0000305" key="8"/>
<keyword id="KW-0009">Actin-binding</keyword>
<keyword id="KW-1003">Cell membrane</keyword>
<keyword id="KW-0966">Cell projection</keyword>
<keyword id="KW-0963">Cytoplasm</keyword>
<keyword id="KW-0472">Membrane</keyword>
<keyword id="KW-0597">Phosphoprotein</keyword>
<keyword id="KW-1185">Reference proteome</keyword>
<keyword id="KW-0728">SH3 domain</keyword>
<keyword id="KW-0770">Synapse</keyword>
<keyword id="KW-0771">Synaptosome</keyword>
<keyword id="KW-0832">Ubl conjugation</keyword>
<sequence>MNGHISNHPSSFEMYPSQMNGYGSSPTFSQMDREHGSKTSAKALYEQRKNYARDSVSSVSDISQYRVEHLTTFVLDRKDAMITVDDGIRKLKLLDAKGKVWTQDMILQVDDRAVSLIDLESKNELENFPLNTIQHCQAVMHSCSYDSVLALVCKEPTQNKPDLHLFQCDEVKANLISEDIESAISDSKGGKQKRRPDALRMISNADPGIPPPPRAPAPAPPGTVTQVDVRSRVAAWSAWAADQGDFEKPRQYHEQEETPEMMAARIDRDVQILNHILDDIEFFITKLQKAAEAFSELSKRKKNKKGKRKGPGEGVLTLRAKPPPPDEFLDCFQKFKHGFNLLAKLKSHIQNPSAADLVHFLFTPLNMVVQATGGPELASSVLSPLLNKDTIDFLNYTVNGDERQLWMSLGGTWTKARAEWPKEQFIPPYVPRFRNGWEPPMLNFMGATMEQDLYQLAESVANVAEHQRKQEIKRLSTEHSSVSEYHPADGYAFSSNIYTRGSHLDQGEAAVAFKPTSNRHIDRNYEPLKTQPKKYAKSKYDFVARNNSELSVLKDDILEILDDRKQWWKVRNASGDSGFVPNNILDIVRPPESGLGRADPPYTHTIQKQRMEYGPRPADTPPAPSPPPTPAPVPVPLPPSTPAPVPVSKFPANITRQNSSSSDSGGSIVRDSQRHKQLPVDRRKSQMEEVQDELIHRLTIGRSAAQKKFHVPRQNVPVINITYDSTPEDVKTWLQSKGFNPVTVNSLGVLNGAQLFSLNKDELRTVCPEGARVYSQITVQKAALEDSSGSSELQEIMRRRQEKISAAASDSGVESFDEGSSH</sequence>
<dbReference type="EMBL" id="CR857764">
    <property type="protein sequence ID" value="CAH90029.1"/>
    <property type="molecule type" value="mRNA"/>
</dbReference>
<dbReference type="EMBL" id="CR861274">
    <property type="protein sequence ID" value="CAH93342.1"/>
    <property type="molecule type" value="mRNA"/>
</dbReference>
<dbReference type="EMBL" id="ABGA01225282">
    <property type="status" value="NOT_ANNOTATED_CDS"/>
    <property type="molecule type" value="Genomic_DNA"/>
</dbReference>
<dbReference type="EMBL" id="ABGA01225283">
    <property type="status" value="NOT_ANNOTATED_CDS"/>
    <property type="molecule type" value="Genomic_DNA"/>
</dbReference>
<dbReference type="EMBL" id="ABGA01225284">
    <property type="status" value="NOT_ANNOTATED_CDS"/>
    <property type="molecule type" value="Genomic_DNA"/>
</dbReference>
<dbReference type="EMBL" id="ABGA01225285">
    <property type="status" value="NOT_ANNOTATED_CDS"/>
    <property type="molecule type" value="Genomic_DNA"/>
</dbReference>
<dbReference type="EMBL" id="ABGA01225286">
    <property type="status" value="NOT_ANNOTATED_CDS"/>
    <property type="molecule type" value="Genomic_DNA"/>
</dbReference>
<dbReference type="EMBL" id="ABGA01225287">
    <property type="status" value="NOT_ANNOTATED_CDS"/>
    <property type="molecule type" value="Genomic_DNA"/>
</dbReference>
<dbReference type="EMBL" id="ABGA01225288">
    <property type="status" value="NOT_ANNOTATED_CDS"/>
    <property type="molecule type" value="Genomic_DNA"/>
</dbReference>
<dbReference type="EMBL" id="ABGA01225289">
    <property type="status" value="NOT_ANNOTATED_CDS"/>
    <property type="molecule type" value="Genomic_DNA"/>
</dbReference>
<dbReference type="EMBL" id="ABGA01225290">
    <property type="status" value="NOT_ANNOTATED_CDS"/>
    <property type="molecule type" value="Genomic_DNA"/>
</dbReference>
<dbReference type="EMBL" id="ABGA01225291">
    <property type="status" value="NOT_ANNOTATED_CDS"/>
    <property type="molecule type" value="Genomic_DNA"/>
</dbReference>
<dbReference type="EMBL" id="ABGA01225292">
    <property type="status" value="NOT_ANNOTATED_CDS"/>
    <property type="molecule type" value="Genomic_DNA"/>
</dbReference>
<dbReference type="EMBL" id="ABGA01225293">
    <property type="status" value="NOT_ANNOTATED_CDS"/>
    <property type="molecule type" value="Genomic_DNA"/>
</dbReference>
<dbReference type="EMBL" id="ABGA01225294">
    <property type="status" value="NOT_ANNOTATED_CDS"/>
    <property type="molecule type" value="Genomic_DNA"/>
</dbReference>
<dbReference type="EMBL" id="ABGA01225295">
    <property type="status" value="NOT_ANNOTATED_CDS"/>
    <property type="molecule type" value="Genomic_DNA"/>
</dbReference>
<dbReference type="EMBL" id="ABGA01225296">
    <property type="status" value="NOT_ANNOTATED_CDS"/>
    <property type="molecule type" value="Genomic_DNA"/>
</dbReference>
<dbReference type="EMBL" id="ABGA01225297">
    <property type="status" value="NOT_ANNOTATED_CDS"/>
    <property type="molecule type" value="Genomic_DNA"/>
</dbReference>
<dbReference type="EMBL" id="ABGA01225298">
    <property type="status" value="NOT_ANNOTATED_CDS"/>
    <property type="molecule type" value="Genomic_DNA"/>
</dbReference>
<dbReference type="EMBL" id="ABGA01225299">
    <property type="status" value="NOT_ANNOTATED_CDS"/>
    <property type="molecule type" value="Genomic_DNA"/>
</dbReference>
<dbReference type="EMBL" id="ABGA01225300">
    <property type="status" value="NOT_ANNOTATED_CDS"/>
    <property type="molecule type" value="Genomic_DNA"/>
</dbReference>
<dbReference type="RefSeq" id="NP_001127655.1">
    <property type="nucleotide sequence ID" value="NM_001134183.1"/>
</dbReference>
<dbReference type="RefSeq" id="XP_009245787.2">
    <property type="nucleotide sequence ID" value="XM_009247512.4"/>
</dbReference>
<dbReference type="RefSeq" id="XP_009245788.1">
    <property type="nucleotide sequence ID" value="XM_009247513.1"/>
</dbReference>
<dbReference type="RefSeq" id="XP_024112101.1">
    <property type="nucleotide sequence ID" value="XM_024256333.3"/>
</dbReference>
<dbReference type="RefSeq" id="XP_024112103.1">
    <property type="nucleotide sequence ID" value="XM_024256335.3"/>
</dbReference>
<dbReference type="RefSeq" id="XP_024112104.1">
    <property type="nucleotide sequence ID" value="XM_024256336.3"/>
</dbReference>
<dbReference type="RefSeq" id="XP_054382555.1">
    <property type="nucleotide sequence ID" value="XM_054526580.2"/>
</dbReference>
<dbReference type="RefSeq" id="XP_054382556.1">
    <property type="nucleotide sequence ID" value="XM_054526581.2"/>
</dbReference>
<dbReference type="RefSeq" id="XP_054382557.1">
    <property type="nucleotide sequence ID" value="XM_054526582.1"/>
</dbReference>
<dbReference type="RefSeq" id="XP_054382558.1">
    <property type="nucleotide sequence ID" value="XM_054526583.2"/>
</dbReference>
<dbReference type="RefSeq" id="XP_063567723.1">
    <property type="nucleotide sequence ID" value="XM_063711653.1"/>
</dbReference>
<dbReference type="SMR" id="Q5R4H4"/>
<dbReference type="FunCoup" id="Q5R4H4">
    <property type="interactions" value="488"/>
</dbReference>
<dbReference type="STRING" id="9601.ENSPPYP00000004948"/>
<dbReference type="GeneID" id="100174737"/>
<dbReference type="KEGG" id="pon:100174737"/>
<dbReference type="CTD" id="2059"/>
<dbReference type="eggNOG" id="KOG3557">
    <property type="taxonomic scope" value="Eukaryota"/>
</dbReference>
<dbReference type="HOGENOM" id="CLU_014510_0_0_1"/>
<dbReference type="InParanoid" id="Q5R4H4"/>
<dbReference type="OrthoDB" id="4680325at2759"/>
<dbReference type="Proteomes" id="UP000001595">
    <property type="component" value="Chromosome 12"/>
</dbReference>
<dbReference type="GO" id="GO:0005938">
    <property type="term" value="C:cell cortex"/>
    <property type="evidence" value="ECO:0000250"/>
    <property type="project" value="UniProtKB"/>
</dbReference>
<dbReference type="GO" id="GO:0030426">
    <property type="term" value="C:growth cone"/>
    <property type="evidence" value="ECO:0007669"/>
    <property type="project" value="UniProtKB-SubCell"/>
</dbReference>
<dbReference type="GO" id="GO:0032587">
    <property type="term" value="C:ruffle membrane"/>
    <property type="evidence" value="ECO:0000250"/>
    <property type="project" value="UniProtKB"/>
</dbReference>
<dbReference type="GO" id="GO:0032420">
    <property type="term" value="C:stereocilium"/>
    <property type="evidence" value="ECO:0000250"/>
    <property type="project" value="UniProtKB"/>
</dbReference>
<dbReference type="GO" id="GO:0045202">
    <property type="term" value="C:synapse"/>
    <property type="evidence" value="ECO:0007669"/>
    <property type="project" value="UniProtKB-SubCell"/>
</dbReference>
<dbReference type="GO" id="GO:0031982">
    <property type="term" value="C:vesicle"/>
    <property type="evidence" value="ECO:0007669"/>
    <property type="project" value="TreeGrafter"/>
</dbReference>
<dbReference type="GO" id="GO:0003779">
    <property type="term" value="F:actin binding"/>
    <property type="evidence" value="ECO:0000250"/>
    <property type="project" value="UniProtKB"/>
</dbReference>
<dbReference type="GO" id="GO:0031267">
    <property type="term" value="F:small GTPase binding"/>
    <property type="evidence" value="ECO:0000250"/>
    <property type="project" value="UniProtKB"/>
</dbReference>
<dbReference type="GO" id="GO:0051764">
    <property type="term" value="P:actin crosslink formation"/>
    <property type="evidence" value="ECO:0000250"/>
    <property type="project" value="UniProtKB"/>
</dbReference>
<dbReference type="GO" id="GO:0051017">
    <property type="term" value="P:actin filament bundle assembly"/>
    <property type="evidence" value="ECO:0000250"/>
    <property type="project" value="UniProtKB"/>
</dbReference>
<dbReference type="GO" id="GO:0070358">
    <property type="term" value="P:actin polymerization-dependent cell motility"/>
    <property type="evidence" value="ECO:0000250"/>
    <property type="project" value="UniProtKB"/>
</dbReference>
<dbReference type="GO" id="GO:0051016">
    <property type="term" value="P:barbed-end actin filament capping"/>
    <property type="evidence" value="ECO:0000250"/>
    <property type="project" value="UniProtKB"/>
</dbReference>
<dbReference type="GO" id="GO:0036336">
    <property type="term" value="P:dendritic cell migration"/>
    <property type="evidence" value="ECO:0000250"/>
    <property type="project" value="UniProtKB"/>
</dbReference>
<dbReference type="GO" id="GO:0010458">
    <property type="term" value="P:exit from mitosis"/>
    <property type="evidence" value="ECO:0000250"/>
    <property type="project" value="UniProtKB"/>
</dbReference>
<dbReference type="GO" id="GO:1900029">
    <property type="term" value="P:positive regulation of ruffle assembly"/>
    <property type="evidence" value="ECO:0007669"/>
    <property type="project" value="TreeGrafter"/>
</dbReference>
<dbReference type="GO" id="GO:0016601">
    <property type="term" value="P:Rac protein signal transduction"/>
    <property type="evidence" value="ECO:0000250"/>
    <property type="project" value="UniProtKB"/>
</dbReference>
<dbReference type="GO" id="GO:0030832">
    <property type="term" value="P:regulation of actin filament length"/>
    <property type="evidence" value="ECO:0000250"/>
    <property type="project" value="UniProtKB"/>
</dbReference>
<dbReference type="GO" id="GO:0008360">
    <property type="term" value="P:regulation of cell shape"/>
    <property type="evidence" value="ECO:0000250"/>
    <property type="project" value="UniProtKB"/>
</dbReference>
<dbReference type="GO" id="GO:0035023">
    <property type="term" value="P:regulation of Rho protein signal transduction"/>
    <property type="evidence" value="ECO:0007669"/>
    <property type="project" value="TreeGrafter"/>
</dbReference>
<dbReference type="GO" id="GO:0007266">
    <property type="term" value="P:Rho protein signal transduction"/>
    <property type="evidence" value="ECO:0007669"/>
    <property type="project" value="TreeGrafter"/>
</dbReference>
<dbReference type="CDD" id="cd01210">
    <property type="entry name" value="PTB_EPS8"/>
    <property type="match status" value="1"/>
</dbReference>
<dbReference type="CDD" id="cd09540">
    <property type="entry name" value="SAM_EPS8-like"/>
    <property type="match status" value="1"/>
</dbReference>
<dbReference type="CDD" id="cd11764">
    <property type="entry name" value="SH3_Eps8"/>
    <property type="match status" value="1"/>
</dbReference>
<dbReference type="FunFam" id="1.10.150.50:FF:000023">
    <property type="entry name" value="Epidermal growth factor receptor kinase substrate 8"/>
    <property type="match status" value="1"/>
</dbReference>
<dbReference type="FunFam" id="2.30.30.40:FF:000071">
    <property type="entry name" value="Epidermal growth factor receptor kinase substrate 8"/>
    <property type="match status" value="1"/>
</dbReference>
<dbReference type="FunFam" id="2.30.29.30:FF:000174">
    <property type="entry name" value="epidermal growth factor receptor kinase substrate 8"/>
    <property type="match status" value="1"/>
</dbReference>
<dbReference type="Gene3D" id="2.30.29.30">
    <property type="entry name" value="Pleckstrin-homology domain (PH domain)/Phosphotyrosine-binding domain (PTB)"/>
    <property type="match status" value="1"/>
</dbReference>
<dbReference type="Gene3D" id="2.30.30.40">
    <property type="entry name" value="SH3 Domains"/>
    <property type="match status" value="1"/>
</dbReference>
<dbReference type="Gene3D" id="1.10.150.50">
    <property type="entry name" value="Transcription Factor, Ets-1"/>
    <property type="match status" value="1"/>
</dbReference>
<dbReference type="InterPro" id="IPR039801">
    <property type="entry name" value="EPS8-like"/>
</dbReference>
<dbReference type="InterPro" id="IPR055093">
    <property type="entry name" value="EPS8_2nd"/>
</dbReference>
<dbReference type="InterPro" id="IPR033928">
    <property type="entry name" value="EPS8_PTB"/>
</dbReference>
<dbReference type="InterPro" id="IPR035462">
    <property type="entry name" value="Eps8_SH3"/>
</dbReference>
<dbReference type="InterPro" id="IPR011993">
    <property type="entry name" value="PH-like_dom_sf"/>
</dbReference>
<dbReference type="InterPro" id="IPR013625">
    <property type="entry name" value="PTB"/>
</dbReference>
<dbReference type="InterPro" id="IPR006020">
    <property type="entry name" value="PTB/PI_dom"/>
</dbReference>
<dbReference type="InterPro" id="IPR013761">
    <property type="entry name" value="SAM/pointed_sf"/>
</dbReference>
<dbReference type="InterPro" id="IPR041418">
    <property type="entry name" value="SAM_3"/>
</dbReference>
<dbReference type="InterPro" id="IPR036028">
    <property type="entry name" value="SH3-like_dom_sf"/>
</dbReference>
<dbReference type="InterPro" id="IPR001452">
    <property type="entry name" value="SH3_domain"/>
</dbReference>
<dbReference type="PANTHER" id="PTHR12287:SF21">
    <property type="entry name" value="EPIDERMAL GROWTH FACTOR RECEPTOR KINASE SUBSTRATE 8"/>
    <property type="match status" value="1"/>
</dbReference>
<dbReference type="PANTHER" id="PTHR12287">
    <property type="entry name" value="EPIDERMAL GROWTH FACTOR RECEPTOR KINASE SUBSTRATE EPS8-RELATED PROTEIN"/>
    <property type="match status" value="1"/>
</dbReference>
<dbReference type="Pfam" id="PF22975">
    <property type="entry name" value="EPS8_2nd"/>
    <property type="match status" value="1"/>
</dbReference>
<dbReference type="Pfam" id="PF08416">
    <property type="entry name" value="PTB"/>
    <property type="match status" value="1"/>
</dbReference>
<dbReference type="Pfam" id="PF18016">
    <property type="entry name" value="SAM_3"/>
    <property type="match status" value="1"/>
</dbReference>
<dbReference type="Pfam" id="PF00018">
    <property type="entry name" value="SH3_1"/>
    <property type="match status" value="1"/>
</dbReference>
<dbReference type="SMART" id="SM00462">
    <property type="entry name" value="PTB"/>
    <property type="match status" value="1"/>
</dbReference>
<dbReference type="SMART" id="SM00326">
    <property type="entry name" value="SH3"/>
    <property type="match status" value="1"/>
</dbReference>
<dbReference type="SUPFAM" id="SSF50729">
    <property type="entry name" value="PH domain-like"/>
    <property type="match status" value="1"/>
</dbReference>
<dbReference type="SUPFAM" id="SSF50044">
    <property type="entry name" value="SH3-domain"/>
    <property type="match status" value="1"/>
</dbReference>
<dbReference type="PROSITE" id="PS50002">
    <property type="entry name" value="SH3"/>
    <property type="match status" value="1"/>
</dbReference>
<proteinExistence type="evidence at transcript level"/>
<feature type="chain" id="PRO_0000086996" description="Epidermal growth factor receptor kinase substrate 8">
    <location>
        <begin position="1"/>
        <end position="822"/>
    </location>
</feature>
<feature type="domain" description="PTB" evidence="5">
    <location>
        <begin position="64"/>
        <end position="194"/>
    </location>
</feature>
<feature type="domain" description="SH3" evidence="6">
    <location>
        <begin position="531"/>
        <end position="590"/>
    </location>
</feature>
<feature type="region of interest" description="Disordered" evidence="7">
    <location>
        <begin position="1"/>
        <end position="39"/>
    </location>
</feature>
<feature type="region of interest" description="Disordered" evidence="7">
    <location>
        <begin position="201"/>
        <end position="225"/>
    </location>
</feature>
<feature type="region of interest" description="Disordered" evidence="7">
    <location>
        <begin position="298"/>
        <end position="320"/>
    </location>
</feature>
<feature type="region of interest" description="Disordered" evidence="7">
    <location>
        <begin position="612"/>
        <end position="689"/>
    </location>
</feature>
<feature type="region of interest" description="Effector region" evidence="1">
    <location>
        <begin position="649"/>
        <end position="822"/>
    </location>
</feature>
<feature type="region of interest" description="Amphipathic helix" evidence="1">
    <location>
        <begin position="680"/>
        <end position="698"/>
    </location>
</feature>
<feature type="region of interest" description="Helix bundle 1" evidence="1">
    <location>
        <begin position="718"/>
        <end position="738"/>
    </location>
</feature>
<feature type="region of interest" description="Helix bundle 2" evidence="1">
    <location>
        <begin position="752"/>
        <end position="757"/>
    </location>
</feature>
<feature type="region of interest" description="Helix bundle 3" evidence="1">
    <location>
        <begin position="762"/>
        <end position="767"/>
    </location>
</feature>
<feature type="region of interest" description="Helix bundle 4" evidence="1">
    <location>
        <begin position="766"/>
        <end position="785"/>
    </location>
</feature>
<feature type="region of interest" description="Disordered" evidence="7">
    <location>
        <begin position="787"/>
        <end position="822"/>
    </location>
</feature>
<feature type="compositionally biased region" description="Polar residues" evidence="7">
    <location>
        <begin position="1"/>
        <end position="10"/>
    </location>
</feature>
<feature type="compositionally biased region" description="Polar residues" evidence="7">
    <location>
        <begin position="17"/>
        <end position="30"/>
    </location>
</feature>
<feature type="compositionally biased region" description="Pro residues" evidence="7">
    <location>
        <begin position="208"/>
        <end position="221"/>
    </location>
</feature>
<feature type="compositionally biased region" description="Basic residues" evidence="7">
    <location>
        <begin position="299"/>
        <end position="309"/>
    </location>
</feature>
<feature type="compositionally biased region" description="Pro residues" evidence="7">
    <location>
        <begin position="618"/>
        <end position="645"/>
    </location>
</feature>
<feature type="compositionally biased region" description="Basic and acidic residues" evidence="7">
    <location>
        <begin position="671"/>
        <end position="687"/>
    </location>
</feature>
<feature type="modified residue" description="Phosphoserine" evidence="2">
    <location>
        <position position="58"/>
    </location>
</feature>
<feature type="modified residue" description="Phosphothreonine" evidence="4">
    <location>
        <position position="223"/>
    </location>
</feature>
<feature type="modified residue" description="Phosphothreonine" evidence="3">
    <location>
        <position position="317"/>
    </location>
</feature>
<feature type="modified residue" description="Phosphoserine" evidence="4">
    <location>
        <position position="476"/>
    </location>
</feature>
<feature type="modified residue" description="Phosphoserine; by MAPK" evidence="3">
    <location>
        <position position="625"/>
    </location>
</feature>
<feature type="modified residue" description="Phosphothreonine; by MAPK" evidence="3">
    <location>
        <position position="629"/>
    </location>
</feature>
<feature type="modified residue" description="Phosphoserine" evidence="3">
    <location>
        <position position="659"/>
    </location>
</feature>
<feature type="modified residue" description="Phosphoserine" evidence="3">
    <location>
        <position position="662"/>
    </location>
</feature>
<feature type="modified residue" description="Phosphoserine" evidence="3">
    <location>
        <position position="685"/>
    </location>
</feature>
<feature type="modified residue" description="Phosphoserine" evidence="3">
    <location>
        <position position="811"/>
    </location>
</feature>
<feature type="modified residue" description="Phosphoserine" evidence="3">
    <location>
        <position position="815"/>
    </location>
</feature>
<feature type="sequence conflict" description="In Ref. 1; CAH90029." evidence="8" ref="1">
    <original>A</original>
    <variation>V</variation>
    <location>
        <position position="41"/>
    </location>
</feature>
<feature type="sequence conflict" description="In Ref. 1; CAH90029." evidence="8" ref="1">
    <original>V</original>
    <variation>A</variation>
    <location>
        <position position="270"/>
    </location>
</feature>
<name>EPS8_PONAB</name>
<gene>
    <name type="primary">EPS8</name>
</gene>
<protein>
    <recommendedName>
        <fullName>Epidermal growth factor receptor kinase substrate 8</fullName>
    </recommendedName>
</protein>
<reference key="1">
    <citation type="submission" date="2004-11" db="EMBL/GenBank/DDBJ databases">
        <authorList>
            <consortium name="The German cDNA consortium"/>
        </authorList>
    </citation>
    <scope>NUCLEOTIDE SEQUENCE [LARGE SCALE MRNA]</scope>
    <source>
        <tissue>Brain cortex</tissue>
        <tissue>Kidney</tissue>
    </source>
</reference>
<reference key="2">
    <citation type="submission" date="2008-02" db="EMBL/GenBank/DDBJ databases">
        <title>A 6x draft sequence assembly of the Pongo pygmaeus abelii genome.</title>
        <authorList>
            <person name="Wilson R.K."/>
            <person name="Mardis E."/>
        </authorList>
    </citation>
    <scope>NUCLEOTIDE SEQUENCE [LARGE SCALE GENOMIC DNA]</scope>
</reference>
<organism>
    <name type="scientific">Pongo abelii</name>
    <name type="common">Sumatran orangutan</name>
    <name type="synonym">Pongo pygmaeus abelii</name>
    <dbReference type="NCBI Taxonomy" id="9601"/>
    <lineage>
        <taxon>Eukaryota</taxon>
        <taxon>Metazoa</taxon>
        <taxon>Chordata</taxon>
        <taxon>Craniata</taxon>
        <taxon>Vertebrata</taxon>
        <taxon>Euteleostomi</taxon>
        <taxon>Mammalia</taxon>
        <taxon>Eutheria</taxon>
        <taxon>Euarchontoglires</taxon>
        <taxon>Primates</taxon>
        <taxon>Haplorrhini</taxon>
        <taxon>Catarrhini</taxon>
        <taxon>Hominidae</taxon>
        <taxon>Pongo</taxon>
    </lineage>
</organism>